<feature type="chain" id="PRO_1000007556" description="Large ribosomal subunit protein uL29">
    <location>
        <begin position="1"/>
        <end position="72"/>
    </location>
</feature>
<organism>
    <name type="scientific">Prochlorococcus marinus (strain MIT 9312)</name>
    <dbReference type="NCBI Taxonomy" id="74546"/>
    <lineage>
        <taxon>Bacteria</taxon>
        <taxon>Bacillati</taxon>
        <taxon>Cyanobacteriota</taxon>
        <taxon>Cyanophyceae</taxon>
        <taxon>Synechococcales</taxon>
        <taxon>Prochlorococcaceae</taxon>
        <taxon>Prochlorococcus</taxon>
    </lineage>
</organism>
<sequence>MKNSESLKEFKKLNSAQITEKIDQLRKDLFDLRFKQATRQLNETHKFKTIKKQVAQLLTLSKSQSASQTTSE</sequence>
<gene>
    <name evidence="1" type="primary">rpmC</name>
    <name evidence="1" type="synonym">rpl29</name>
    <name type="ordered locus">PMT9312_1642</name>
</gene>
<name>RL29_PROM9</name>
<protein>
    <recommendedName>
        <fullName evidence="1">Large ribosomal subunit protein uL29</fullName>
    </recommendedName>
    <alternativeName>
        <fullName evidence="2">50S ribosomal protein L29</fullName>
    </alternativeName>
</protein>
<keyword id="KW-0687">Ribonucleoprotein</keyword>
<keyword id="KW-0689">Ribosomal protein</keyword>
<dbReference type="EMBL" id="CP000111">
    <property type="protein sequence ID" value="ABB50703.1"/>
    <property type="molecule type" value="Genomic_DNA"/>
</dbReference>
<dbReference type="RefSeq" id="WP_011377184.1">
    <property type="nucleotide sequence ID" value="NC_007577.1"/>
</dbReference>
<dbReference type="SMR" id="Q318J2"/>
<dbReference type="STRING" id="74546.PMT9312_1642"/>
<dbReference type="KEGG" id="pmi:PMT9312_1642"/>
<dbReference type="eggNOG" id="COG0255">
    <property type="taxonomic scope" value="Bacteria"/>
</dbReference>
<dbReference type="HOGENOM" id="CLU_158491_0_1_3"/>
<dbReference type="OrthoDB" id="9815192at2"/>
<dbReference type="Proteomes" id="UP000002715">
    <property type="component" value="Chromosome"/>
</dbReference>
<dbReference type="GO" id="GO:0022625">
    <property type="term" value="C:cytosolic large ribosomal subunit"/>
    <property type="evidence" value="ECO:0007669"/>
    <property type="project" value="TreeGrafter"/>
</dbReference>
<dbReference type="GO" id="GO:0003735">
    <property type="term" value="F:structural constituent of ribosome"/>
    <property type="evidence" value="ECO:0007669"/>
    <property type="project" value="InterPro"/>
</dbReference>
<dbReference type="GO" id="GO:0006412">
    <property type="term" value="P:translation"/>
    <property type="evidence" value="ECO:0007669"/>
    <property type="project" value="UniProtKB-UniRule"/>
</dbReference>
<dbReference type="Gene3D" id="1.10.287.310">
    <property type="match status" value="1"/>
</dbReference>
<dbReference type="HAMAP" id="MF_00374">
    <property type="entry name" value="Ribosomal_uL29"/>
    <property type="match status" value="1"/>
</dbReference>
<dbReference type="InterPro" id="IPR050063">
    <property type="entry name" value="Ribosomal_protein_uL29"/>
</dbReference>
<dbReference type="InterPro" id="IPR001854">
    <property type="entry name" value="Ribosomal_uL29"/>
</dbReference>
<dbReference type="InterPro" id="IPR036049">
    <property type="entry name" value="Ribosomal_uL29_sf"/>
</dbReference>
<dbReference type="NCBIfam" id="TIGR00012">
    <property type="entry name" value="L29"/>
    <property type="match status" value="1"/>
</dbReference>
<dbReference type="PANTHER" id="PTHR10916">
    <property type="entry name" value="60S RIBOSOMAL PROTEIN L35/50S RIBOSOMAL PROTEIN L29"/>
    <property type="match status" value="1"/>
</dbReference>
<dbReference type="PANTHER" id="PTHR10916:SF0">
    <property type="entry name" value="LARGE RIBOSOMAL SUBUNIT PROTEIN UL29C"/>
    <property type="match status" value="1"/>
</dbReference>
<dbReference type="Pfam" id="PF00831">
    <property type="entry name" value="Ribosomal_L29"/>
    <property type="match status" value="1"/>
</dbReference>
<dbReference type="SUPFAM" id="SSF46561">
    <property type="entry name" value="Ribosomal protein L29 (L29p)"/>
    <property type="match status" value="1"/>
</dbReference>
<comment type="similarity">
    <text evidence="1">Belongs to the universal ribosomal protein uL29 family.</text>
</comment>
<accession>Q318J2</accession>
<evidence type="ECO:0000255" key="1">
    <source>
        <dbReference type="HAMAP-Rule" id="MF_00374"/>
    </source>
</evidence>
<evidence type="ECO:0000305" key="2"/>
<proteinExistence type="inferred from homology"/>
<reference key="1">
    <citation type="journal article" date="2006" name="Science">
        <title>Genomic islands and the ecology and evolution of Prochlorococcus.</title>
        <authorList>
            <person name="Coleman M.L."/>
            <person name="Sullivan M.B."/>
            <person name="Martiny A.C."/>
            <person name="Steglich C."/>
            <person name="Barry K."/>
            <person name="Delong E.F."/>
            <person name="Chisholm S.W."/>
        </authorList>
    </citation>
    <scope>NUCLEOTIDE SEQUENCE [LARGE SCALE GENOMIC DNA]</scope>
    <source>
        <strain>MIT 9312</strain>
    </source>
</reference>